<evidence type="ECO:0000255" key="1">
    <source>
        <dbReference type="HAMAP-Rule" id="MF_00106"/>
    </source>
</evidence>
<reference key="1">
    <citation type="journal article" date="2005" name="Nucleic Acids Res.">
        <title>Genome dynamics and diversity of Shigella species, the etiologic agents of bacillary dysentery.</title>
        <authorList>
            <person name="Yang F."/>
            <person name="Yang J."/>
            <person name="Zhang X."/>
            <person name="Chen L."/>
            <person name="Jiang Y."/>
            <person name="Yan Y."/>
            <person name="Tang X."/>
            <person name="Wang J."/>
            <person name="Xiong Z."/>
            <person name="Dong J."/>
            <person name="Xue Y."/>
            <person name="Zhu Y."/>
            <person name="Xu X."/>
            <person name="Sun L."/>
            <person name="Chen S."/>
            <person name="Nie H."/>
            <person name="Peng J."/>
            <person name="Xu J."/>
            <person name="Wang Y."/>
            <person name="Yuan Z."/>
            <person name="Wen Y."/>
            <person name="Yao Z."/>
            <person name="Shen Y."/>
            <person name="Qiang B."/>
            <person name="Hou Y."/>
            <person name="Yu J."/>
            <person name="Jin Q."/>
        </authorList>
    </citation>
    <scope>NUCLEOTIDE SEQUENCE [LARGE SCALE GENOMIC DNA]</scope>
    <source>
        <strain>Ss046</strain>
    </source>
</reference>
<organism>
    <name type="scientific">Shigella sonnei (strain Ss046)</name>
    <dbReference type="NCBI Taxonomy" id="300269"/>
    <lineage>
        <taxon>Bacteria</taxon>
        <taxon>Pseudomonadati</taxon>
        <taxon>Pseudomonadota</taxon>
        <taxon>Gammaproteobacteria</taxon>
        <taxon>Enterobacterales</taxon>
        <taxon>Enterobacteriaceae</taxon>
        <taxon>Shigella</taxon>
    </lineage>
</organism>
<dbReference type="EC" id="4.2.1.8" evidence="1"/>
<dbReference type="EMBL" id="CP000038">
    <property type="protein sequence ID" value="AAZ90953.1"/>
    <property type="molecule type" value="Genomic_DNA"/>
</dbReference>
<dbReference type="RefSeq" id="WP_000438596.1">
    <property type="nucleotide sequence ID" value="NC_007384.1"/>
</dbReference>
<dbReference type="SMR" id="Q3YU59"/>
<dbReference type="KEGG" id="ssn:SSON_4477"/>
<dbReference type="HOGENOM" id="CLU_058621_2_0_6"/>
<dbReference type="UniPathway" id="UPA00246"/>
<dbReference type="Proteomes" id="UP000002529">
    <property type="component" value="Chromosome"/>
</dbReference>
<dbReference type="GO" id="GO:0008198">
    <property type="term" value="F:ferrous iron binding"/>
    <property type="evidence" value="ECO:0007669"/>
    <property type="project" value="TreeGrafter"/>
</dbReference>
<dbReference type="GO" id="GO:0030145">
    <property type="term" value="F:manganese ion binding"/>
    <property type="evidence" value="ECO:0007669"/>
    <property type="project" value="TreeGrafter"/>
</dbReference>
<dbReference type="GO" id="GO:0008927">
    <property type="term" value="F:mannonate dehydratase activity"/>
    <property type="evidence" value="ECO:0007669"/>
    <property type="project" value="UniProtKB-UniRule"/>
</dbReference>
<dbReference type="GO" id="GO:0042840">
    <property type="term" value="P:D-glucuronate catabolic process"/>
    <property type="evidence" value="ECO:0007669"/>
    <property type="project" value="TreeGrafter"/>
</dbReference>
<dbReference type="FunFam" id="3.20.20.150:FF:000004">
    <property type="entry name" value="Mannonate dehydratase"/>
    <property type="match status" value="1"/>
</dbReference>
<dbReference type="FunFam" id="3.20.20.150:FF:000005">
    <property type="entry name" value="Mannonate dehydratase"/>
    <property type="match status" value="1"/>
</dbReference>
<dbReference type="Gene3D" id="3.20.20.150">
    <property type="entry name" value="Divalent-metal-dependent TIM barrel enzymes"/>
    <property type="match status" value="2"/>
</dbReference>
<dbReference type="HAMAP" id="MF_00106">
    <property type="entry name" value="UxuA"/>
    <property type="match status" value="1"/>
</dbReference>
<dbReference type="InterPro" id="IPR004628">
    <property type="entry name" value="Man_deHydtase"/>
</dbReference>
<dbReference type="InterPro" id="IPR036237">
    <property type="entry name" value="Xyl_isomerase-like_sf"/>
</dbReference>
<dbReference type="NCBIfam" id="NF003027">
    <property type="entry name" value="PRK03906.1"/>
    <property type="match status" value="1"/>
</dbReference>
<dbReference type="NCBIfam" id="TIGR00695">
    <property type="entry name" value="uxuA"/>
    <property type="match status" value="1"/>
</dbReference>
<dbReference type="PANTHER" id="PTHR30387">
    <property type="entry name" value="MANNONATE DEHYDRATASE"/>
    <property type="match status" value="1"/>
</dbReference>
<dbReference type="PANTHER" id="PTHR30387:SF2">
    <property type="entry name" value="MANNONATE DEHYDRATASE"/>
    <property type="match status" value="1"/>
</dbReference>
<dbReference type="Pfam" id="PF03786">
    <property type="entry name" value="UxuA"/>
    <property type="match status" value="1"/>
</dbReference>
<dbReference type="PIRSF" id="PIRSF016049">
    <property type="entry name" value="Man_dehyd"/>
    <property type="match status" value="1"/>
</dbReference>
<dbReference type="SUPFAM" id="SSF51658">
    <property type="entry name" value="Xylose isomerase-like"/>
    <property type="match status" value="1"/>
</dbReference>
<proteinExistence type="inferred from homology"/>
<protein>
    <recommendedName>
        <fullName evidence="1">Mannonate dehydratase</fullName>
        <ecNumber evidence="1">4.2.1.8</ecNumber>
    </recommendedName>
    <alternativeName>
        <fullName evidence="1">D-mannonate hydro-lyase</fullName>
    </alternativeName>
</protein>
<keyword id="KW-0408">Iron</keyword>
<keyword id="KW-0456">Lyase</keyword>
<keyword id="KW-0464">Manganese</keyword>
<keyword id="KW-1185">Reference proteome</keyword>
<feature type="chain" id="PRO_0000231057" description="Mannonate dehydratase">
    <location>
        <begin position="1"/>
        <end position="394"/>
    </location>
</feature>
<sequence length="394" mass="44852">MEQTWRWYGPNDPVSLADVRQAGATGVVTALHHIPNGEVWSVEEILKRKAIVEDAGLVWSVVESVPIHEDIKTHTGNYEQWIANYQQTLRNLVQCGIRTVCYNFMPVLDWTRTDLEYVLPDGSKALRFDQIEFAAFEMHILKRPGAEADYTEEEIAQAAERFATMSDEDKARLTRNIIAGLPGAEEGYTLDQFRKHLELYKDIDKAKLRENFAVFLKAIIPVAEEVGVRMAVHPDDPPRPILGLPRIVSTIEDMQWMVDTVNSMANGFTMCTGSYGVRADNDLVDMIKQFGPRIYFTHLRSTMREDNPKTFHEAAHLNGDVDMYEVVKAIVEEEHRRKAEGKEDLIPMRPDHGHQMLDDLKKKTNPGYSAIGRLKGLAEVRGVELAIQRAFFSR</sequence>
<gene>
    <name evidence="1" type="primary">uxuA</name>
    <name type="ordered locus">SSON_4477</name>
</gene>
<comment type="function">
    <text evidence="1">Catalyzes the dehydration of D-mannonate.</text>
</comment>
<comment type="catalytic activity">
    <reaction evidence="1">
        <text>D-mannonate = 2-dehydro-3-deoxy-D-gluconate + H2O</text>
        <dbReference type="Rhea" id="RHEA:20097"/>
        <dbReference type="ChEBI" id="CHEBI:15377"/>
        <dbReference type="ChEBI" id="CHEBI:17767"/>
        <dbReference type="ChEBI" id="CHEBI:57990"/>
        <dbReference type="EC" id="4.2.1.8"/>
    </reaction>
</comment>
<comment type="cofactor">
    <cofactor evidence="1">
        <name>Fe(2+)</name>
        <dbReference type="ChEBI" id="CHEBI:29033"/>
    </cofactor>
    <cofactor evidence="1">
        <name>Mn(2+)</name>
        <dbReference type="ChEBI" id="CHEBI:29035"/>
    </cofactor>
</comment>
<comment type="pathway">
    <text evidence="1">Carbohydrate metabolism; pentose and glucuronate interconversion.</text>
</comment>
<comment type="similarity">
    <text evidence="1">Belongs to the mannonate dehydratase family.</text>
</comment>
<accession>Q3YU59</accession>
<name>UXUA_SHISS</name>